<organism>
    <name type="scientific">Glycine max</name>
    <name type="common">Soybean</name>
    <name type="synonym">Glycine hispida</name>
    <dbReference type="NCBI Taxonomy" id="3847"/>
    <lineage>
        <taxon>Eukaryota</taxon>
        <taxon>Viridiplantae</taxon>
        <taxon>Streptophyta</taxon>
        <taxon>Embryophyta</taxon>
        <taxon>Tracheophyta</taxon>
        <taxon>Spermatophyta</taxon>
        <taxon>Magnoliopsida</taxon>
        <taxon>eudicotyledons</taxon>
        <taxon>Gunneridae</taxon>
        <taxon>Pentapetalae</taxon>
        <taxon>rosids</taxon>
        <taxon>fabids</taxon>
        <taxon>Fabales</taxon>
        <taxon>Fabaceae</taxon>
        <taxon>Papilionoideae</taxon>
        <taxon>50 kb inversion clade</taxon>
        <taxon>NPAAA clade</taxon>
        <taxon>indigoferoid/millettioid clade</taxon>
        <taxon>Phaseoleae</taxon>
        <taxon>Glycine</taxon>
        <taxon>Glycine subgen. Soja</taxon>
    </lineage>
</organism>
<feature type="chain" id="PRO_0000230760" description="Small ribosomal subunit protein uS3c">
    <location>
        <begin position="1"/>
        <end position="216"/>
    </location>
</feature>
<feature type="domain" description="KH type-2">
    <location>
        <begin position="43"/>
        <end position="118"/>
    </location>
</feature>
<protein>
    <recommendedName>
        <fullName evidence="2">Small ribosomal subunit protein uS3c</fullName>
    </recommendedName>
    <alternativeName>
        <fullName>30S ribosomal protein S3, chloroplastic</fullName>
    </alternativeName>
</protein>
<proteinExistence type="inferred from homology"/>
<evidence type="ECO:0000250" key="1"/>
<evidence type="ECO:0000305" key="2"/>
<keyword id="KW-0150">Chloroplast</keyword>
<keyword id="KW-0934">Plastid</keyword>
<keyword id="KW-1185">Reference proteome</keyword>
<keyword id="KW-0687">Ribonucleoprotein</keyword>
<keyword id="KW-0689">Ribosomal protein</keyword>
<keyword id="KW-0694">RNA-binding</keyword>
<keyword id="KW-0699">rRNA-binding</keyword>
<geneLocation type="chloroplast"/>
<accession>Q2PMP7</accession>
<reference key="1">
    <citation type="journal article" date="2005" name="Plant Mol. Biol.">
        <title>Complete chloroplast genome sequence of Glycine max and comparative analyses with other legume genomes.</title>
        <authorList>
            <person name="Saski C."/>
            <person name="Lee S.-B."/>
            <person name="Daniell H."/>
            <person name="Wood T.C."/>
            <person name="Tomkins J."/>
            <person name="Kim H.-G."/>
            <person name="Jansen R.K."/>
        </authorList>
    </citation>
    <scope>NUCLEOTIDE SEQUENCE [LARGE SCALE GENOMIC DNA]</scope>
    <source>
        <strain>cv. PI 437654</strain>
    </source>
</reference>
<sequence length="216" mass="24705">MGQKINPLGFRLGTTQSHDSIWFAQPTNYSENIQEDKKIRDCIKNYIQKNIRISSGVEGIGQIKIQKRIDLIQVIIYMGFPKLLIEGKSQKIEELQTNMQKKLNCVNRKLNIAIVKVANAYKHPNIIAEFIAGQLKNRVSFRKAMKKAIELTEQAGTKGVQVQIAGRIDGKEIARVEWIREGRVPLQTIRAKIDYCCYTVRTIYGVLGIKVWIFSK</sequence>
<gene>
    <name type="primary">rps3</name>
</gene>
<name>RR3_SOYBN</name>
<dbReference type="EMBL" id="DQ317523">
    <property type="protein sequence ID" value="ABC25161.1"/>
    <property type="molecule type" value="Genomic_DNA"/>
</dbReference>
<dbReference type="RefSeq" id="YP_538803.1">
    <property type="nucleotide sequence ID" value="NC_007942.1"/>
</dbReference>
<dbReference type="SMR" id="Q2PMP7"/>
<dbReference type="FunCoup" id="Q2PMP7">
    <property type="interactions" value="536"/>
</dbReference>
<dbReference type="STRING" id="3847.Q2PMP7"/>
<dbReference type="PaxDb" id="3847-GLYMA14G03840.1"/>
<dbReference type="GeneID" id="3989335"/>
<dbReference type="KEGG" id="gmx:3989335"/>
<dbReference type="InParanoid" id="Q2PMP7"/>
<dbReference type="Proteomes" id="UP000008827">
    <property type="component" value="Chloroplast"/>
</dbReference>
<dbReference type="GO" id="GO:0009507">
    <property type="term" value="C:chloroplast"/>
    <property type="evidence" value="ECO:0007669"/>
    <property type="project" value="UniProtKB-SubCell"/>
</dbReference>
<dbReference type="GO" id="GO:0022627">
    <property type="term" value="C:cytosolic small ribosomal subunit"/>
    <property type="evidence" value="ECO:0000318"/>
    <property type="project" value="GO_Central"/>
</dbReference>
<dbReference type="GO" id="GO:0019843">
    <property type="term" value="F:rRNA binding"/>
    <property type="evidence" value="ECO:0007669"/>
    <property type="project" value="UniProtKB-UniRule"/>
</dbReference>
<dbReference type="GO" id="GO:0003735">
    <property type="term" value="F:structural constituent of ribosome"/>
    <property type="evidence" value="ECO:0000318"/>
    <property type="project" value="GO_Central"/>
</dbReference>
<dbReference type="GO" id="GO:0006412">
    <property type="term" value="P:translation"/>
    <property type="evidence" value="ECO:0007669"/>
    <property type="project" value="UniProtKB-UniRule"/>
</dbReference>
<dbReference type="CDD" id="cd02412">
    <property type="entry name" value="KH-II_30S_S3"/>
    <property type="match status" value="1"/>
</dbReference>
<dbReference type="FunFam" id="3.30.1140.32:FF:000003">
    <property type="entry name" value="30S ribosomal protein S3, chloroplastic"/>
    <property type="match status" value="1"/>
</dbReference>
<dbReference type="FunFam" id="3.30.300.20:FF:000008">
    <property type="entry name" value="30S ribosomal protein S3, chloroplastic"/>
    <property type="match status" value="1"/>
</dbReference>
<dbReference type="Gene3D" id="3.30.300.20">
    <property type="match status" value="1"/>
</dbReference>
<dbReference type="Gene3D" id="3.30.1140.32">
    <property type="entry name" value="Ribosomal protein S3, C-terminal domain"/>
    <property type="match status" value="1"/>
</dbReference>
<dbReference type="HAMAP" id="MF_01309_B">
    <property type="entry name" value="Ribosomal_uS3_B"/>
    <property type="match status" value="1"/>
</dbReference>
<dbReference type="InterPro" id="IPR015946">
    <property type="entry name" value="KH_dom-like_a/b"/>
</dbReference>
<dbReference type="InterPro" id="IPR004044">
    <property type="entry name" value="KH_dom_type_2"/>
</dbReference>
<dbReference type="InterPro" id="IPR009019">
    <property type="entry name" value="KH_sf_prok-type"/>
</dbReference>
<dbReference type="InterPro" id="IPR036419">
    <property type="entry name" value="Ribosomal_S3_C_sf"/>
</dbReference>
<dbReference type="InterPro" id="IPR005704">
    <property type="entry name" value="Ribosomal_uS3_bac-typ"/>
</dbReference>
<dbReference type="InterPro" id="IPR001351">
    <property type="entry name" value="Ribosomal_uS3_C"/>
</dbReference>
<dbReference type="InterPro" id="IPR018280">
    <property type="entry name" value="Ribosomal_uS3_CS"/>
</dbReference>
<dbReference type="NCBIfam" id="TIGR01009">
    <property type="entry name" value="rpsC_bact"/>
    <property type="match status" value="1"/>
</dbReference>
<dbReference type="PANTHER" id="PTHR11760">
    <property type="entry name" value="30S/40S RIBOSOMAL PROTEIN S3"/>
    <property type="match status" value="1"/>
</dbReference>
<dbReference type="PANTHER" id="PTHR11760:SF19">
    <property type="entry name" value="SMALL RIBOSOMAL SUBUNIT PROTEIN US3C"/>
    <property type="match status" value="1"/>
</dbReference>
<dbReference type="Pfam" id="PF00189">
    <property type="entry name" value="Ribosomal_S3_C"/>
    <property type="match status" value="1"/>
</dbReference>
<dbReference type="SUPFAM" id="SSF54814">
    <property type="entry name" value="Prokaryotic type KH domain (KH-domain type II)"/>
    <property type="match status" value="1"/>
</dbReference>
<dbReference type="SUPFAM" id="SSF54821">
    <property type="entry name" value="Ribosomal protein S3 C-terminal domain"/>
    <property type="match status" value="1"/>
</dbReference>
<dbReference type="PROSITE" id="PS50823">
    <property type="entry name" value="KH_TYPE_2"/>
    <property type="match status" value="1"/>
</dbReference>
<dbReference type="PROSITE" id="PS00548">
    <property type="entry name" value="RIBOSOMAL_S3"/>
    <property type="match status" value="1"/>
</dbReference>
<comment type="subunit">
    <text evidence="1">Part of the 30S ribosomal subunit.</text>
</comment>
<comment type="subcellular location">
    <subcellularLocation>
        <location>Plastid</location>
        <location>Chloroplast</location>
    </subcellularLocation>
</comment>
<comment type="similarity">
    <text evidence="2">Belongs to the universal ribosomal protein uS3 family.</text>
</comment>